<comment type="function">
    <text evidence="3 4">Dimerizing cyclase; part of the gene cluster that mediates the biosynthesis of the antihypercholesterolemic agents phomoidrides which are dimeric anhydrides (PubMed:26558485, PubMed:36374185). Within the pathway, tstC produces the bicyclo[4.3.1]deca-1,6-diene core of phomoidrides via the dimerization of the monomeric anhydrides leading to prephomoidride (PubMed:36374185). The pathway begins with the highly reducing polyketide synthase tstA that catalyzes the formation of a C12-fatty acyl-ACP, starting from one acetate and 5 malonate units. The hydrolase tstM is involved in the release of the C12-fatty acyl chain from phiA. The alkylcitrate synthase (ACS) tstJ and the alkylcitrate dehydratase (ACDH) tstI then give rise to decarboxylated monomeric anhydrides by coupling the C12-fatty acyl chain with oxalacetic acid. The cyclase tstC is responsible for the dimerization of the monomeric anhydrides which leads to the production of prephomoidride that contains the characteristic bicyclo[4.3.1]deca-1,6-diene system of phomoidrides. Iterative oxidation catalyzed by the alpha-ketoglutarate-dependent dioxygenase tstK produced then phomoidride A. Finally, the methyltransferase tstE converts phomoidride A to phomoidride B via an acetalization reaction. The phosphatidylethanolamine-binding protein tstB and tstN are not essential for dimerization and their functions have still to be determined (PubMed:36374185).</text>
</comment>
<comment type="catalytic activity">
    <reaction evidence="4">
        <text>2 [4-(deca-1,8-diyl)-2,5-dioxo-2,5-dihydro-3-furanyl]acetate + H(+) = 2-[(1R,8S,14R,15R)-11-hydroxy-14,15-bis[(6E)-oct-6-en-1-yl]-3,5,9-trioxo-4,10-dioxatetracyclo[9.4.0.0(2,6).0(8,12)]pentadeca-2(6),12-dien-8-yl]acetate + CO2</text>
        <dbReference type="Rhea" id="RHEA:77651"/>
        <dbReference type="ChEBI" id="CHEBI:15378"/>
        <dbReference type="ChEBI" id="CHEBI:16526"/>
        <dbReference type="ChEBI" id="CHEBI:197420"/>
        <dbReference type="ChEBI" id="CHEBI:197434"/>
    </reaction>
    <physiologicalReaction direction="left-to-right" evidence="4">
        <dbReference type="Rhea" id="RHEA:77652"/>
    </physiologicalReaction>
</comment>
<comment type="pathway">
    <text evidence="4">Secondary metabolite biosynthesis.</text>
</comment>
<comment type="biotechnology">
    <text evidence="5">Phomoidrides A and B (also known as CP-225,917 and CP-263,114) are potent inhibitors of Ras farnesyltransferase and squalene synthase (PubMed:9066758). CP-225,917 and CP-263,114 inhibit Ras farnesyl transferase from rat brain with IC(50) values of 6 uM and 20 uoM, respectively (PubMed:9066758). CP-225,917 inhibits squalene synthase with an IC(50) value of 43 uM and CP-263,114 with an IC(50) of 160 uM (PubMed:9066758).</text>
</comment>
<comment type="similarity">
    <text evidence="7">Belongs to the dimerizing cyclase tstC family.</text>
</comment>
<accession>B8MKZ0</accession>
<name>TSTC_TALSN</name>
<evidence type="ECO:0000255" key="1"/>
<evidence type="ECO:0000255" key="2">
    <source>
        <dbReference type="PROSITE-ProRule" id="PRU00498"/>
    </source>
</evidence>
<evidence type="ECO:0000269" key="3">
    <source>
    </source>
</evidence>
<evidence type="ECO:0000269" key="4">
    <source>
    </source>
</evidence>
<evidence type="ECO:0000269" key="5">
    <source>
    </source>
</evidence>
<evidence type="ECO:0000303" key="6">
    <source>
    </source>
</evidence>
<evidence type="ECO:0000305" key="7"/>
<protein>
    <recommendedName>
        <fullName evidence="6">Dimerizing cyclase tstC</fullName>
        <ecNumber evidence="4">5.-.-.-</ecNumber>
    </recommendedName>
    <alternativeName>
        <fullName evidence="6">Phomoidride biosynthesis cluster protein C</fullName>
    </alternativeName>
</protein>
<keyword id="KW-0325">Glycoprotein</keyword>
<keyword id="KW-0413">Isomerase</keyword>
<keyword id="KW-1185">Reference proteome</keyword>
<keyword id="KW-0732">Signal</keyword>
<organism>
    <name type="scientific">Talaromyces stipitatus (strain ATCC 10500 / CBS 375.48 / QM 6759 / NRRL 1006)</name>
    <name type="common">Penicillium stipitatum</name>
    <dbReference type="NCBI Taxonomy" id="441959"/>
    <lineage>
        <taxon>Eukaryota</taxon>
        <taxon>Fungi</taxon>
        <taxon>Dikarya</taxon>
        <taxon>Ascomycota</taxon>
        <taxon>Pezizomycotina</taxon>
        <taxon>Eurotiomycetes</taxon>
        <taxon>Eurotiomycetidae</taxon>
        <taxon>Eurotiales</taxon>
        <taxon>Trichocomaceae</taxon>
        <taxon>Talaromyces</taxon>
        <taxon>Talaromyces sect. Talaromyces</taxon>
    </lineage>
</organism>
<dbReference type="EC" id="5.-.-.-" evidence="4"/>
<dbReference type="EMBL" id="EQ962657">
    <property type="protein sequence ID" value="EED15406.1"/>
    <property type="molecule type" value="Genomic_DNA"/>
</dbReference>
<dbReference type="RefSeq" id="XP_002485359.1">
    <property type="nucleotide sequence ID" value="XM_002485314.1"/>
</dbReference>
<dbReference type="SMR" id="B8MKZ0"/>
<dbReference type="STRING" id="441959.B8MKZ0"/>
<dbReference type="GeneID" id="8107028"/>
<dbReference type="VEuPathDB" id="FungiDB:TSTA_048460"/>
<dbReference type="eggNOG" id="ENOG502SQ9R">
    <property type="taxonomic scope" value="Eukaryota"/>
</dbReference>
<dbReference type="HOGENOM" id="CLU_092151_0_0_1"/>
<dbReference type="InParanoid" id="B8MKZ0"/>
<dbReference type="OMA" id="WHNGRIV"/>
<dbReference type="OrthoDB" id="10264449at2759"/>
<dbReference type="PhylomeDB" id="B8MKZ0"/>
<dbReference type="Proteomes" id="UP000001745">
    <property type="component" value="Unassembled WGS sequence"/>
</dbReference>
<dbReference type="GO" id="GO:0016853">
    <property type="term" value="F:isomerase activity"/>
    <property type="evidence" value="ECO:0007669"/>
    <property type="project" value="UniProtKB-KW"/>
</dbReference>
<dbReference type="Gene3D" id="3.10.450.50">
    <property type="match status" value="1"/>
</dbReference>
<dbReference type="InterPro" id="IPR032710">
    <property type="entry name" value="NTF2-like_dom_sf"/>
</dbReference>
<dbReference type="SUPFAM" id="SSF54427">
    <property type="entry name" value="NTF2-like"/>
    <property type="match status" value="1"/>
</dbReference>
<reference key="1">
    <citation type="journal article" date="2015" name="Genome Announc.">
        <title>Genome sequence of the AIDS-associated pathogen Penicillium marneffei (ATCC18224) and its near taxonomic relative Talaromyces stipitatus (ATCC10500).</title>
        <authorList>
            <person name="Nierman W.C."/>
            <person name="Fedorova-Abrams N.D."/>
            <person name="Andrianopoulos A."/>
        </authorList>
    </citation>
    <scope>NUCLEOTIDE SEQUENCE [LARGE SCALE GENOMIC DNA]</scope>
    <source>
        <strain>ATCC 10500 / CBS 375.48 / QM 6759 / NRRL 1006</strain>
    </source>
</reference>
<reference key="2">
    <citation type="journal article" date="1997" name="J. Antibiot.">
        <title>CP-225,917 and CP-263,114, novel Ras farnesylation inhibitors from an unidentified fungus. I. Taxonomy, fermentation, isolation, and biochemical properties.</title>
        <authorList>
            <person name="Dabrah T.T."/>
            <person name="Harwood H.J. Jr."/>
            <person name="Huang L.H."/>
            <person name="Jankovich N.D."/>
            <person name="Kaneko T."/>
            <person name="Li J.C."/>
            <person name="Lindsey S."/>
            <person name="Moshier P.M."/>
            <person name="Subashi T.A."/>
            <person name="Therrien M."/>
            <person name="Watts P.C."/>
        </authorList>
    </citation>
    <scope>BIOTECHNOLOGY</scope>
</reference>
<reference key="3">
    <citation type="journal article" date="2015" name="Org. Lett.">
        <title>Biosynthetic study on antihypercholesterolemic agent phomoidride: general biogenesis of fungal dimeric anhydrides.</title>
        <authorList>
            <person name="Fujii R."/>
            <person name="Matsu Y."/>
            <person name="Minami A."/>
            <person name="Nagamine S."/>
            <person name="Takeuchi I."/>
            <person name="Gomi K."/>
            <person name="Oikawa H."/>
        </authorList>
    </citation>
    <scope>FUNCTION</scope>
</reference>
<reference key="4">
    <citation type="journal article" date="2022" name="J. Am. Chem. Soc.">
        <title>Elucidation of late-stage biosynthesis of phomoidride: proposal of cyclization mechanism affording characteristic nine-membered ring of fungal dimeric anhydride.</title>
        <authorList>
            <person name="Yamamoto S."/>
            <person name="Matsuyama T."/>
            <person name="Ozaki T."/>
            <person name="Takino J."/>
            <person name="Sato H."/>
            <person name="Uchiyama M."/>
            <person name="Minami A."/>
            <person name="Oikawa H."/>
        </authorList>
    </citation>
    <scope>FUNCTION</scope>
    <scope>CATALYTIC ACTIVITY</scope>
    <scope>PATHWAY</scope>
</reference>
<proteinExistence type="evidence at protein level"/>
<sequence length="225" mass="25886">MRLSTLSSLLLGSSSIVFARVPPTVDNQEPIKSTSYFLDDPDFPSHFEFENPETNCKYVSQPWIYNAFNSVSEDMEAVFKYAHPDLHVRIMGHHPFAGYYHNPKMAFVNSLWRLNNCLKDAKVDAKLWAIHGGCDQAWSVQEFYFNATTNKGQPWELTSLWVSRWDEDGLIREVRTWVDAGQIMRTLWDNEIWFNSSDRVHHYDFIPGPGGLPPIANKTELGGEL</sequence>
<feature type="signal peptide" evidence="1">
    <location>
        <begin position="1"/>
        <end position="19"/>
    </location>
</feature>
<feature type="chain" id="PRO_5002877798" description="Dimerizing cyclase tstC" evidence="1">
    <location>
        <begin position="20"/>
        <end position="225"/>
    </location>
</feature>
<feature type="glycosylation site" description="N-linked (GlcNAc...) asparagine" evidence="2">
    <location>
        <position position="146"/>
    </location>
</feature>
<feature type="glycosylation site" description="N-linked (GlcNAc...) asparagine" evidence="2">
    <location>
        <position position="195"/>
    </location>
</feature>
<feature type="glycosylation site" description="N-linked (GlcNAc...) asparagine" evidence="2">
    <location>
        <position position="217"/>
    </location>
</feature>
<gene>
    <name evidence="6" type="primary">tstC</name>
    <name type="ORF">TSTA_048460</name>
</gene>